<keyword id="KW-0012">Acyltransferase</keyword>
<keyword id="KW-0028">Amino-acid biosynthesis</keyword>
<keyword id="KW-0963">Cytoplasm</keyword>
<keyword id="KW-0220">Diaminopimelate biosynthesis</keyword>
<keyword id="KW-0457">Lysine biosynthesis</keyword>
<keyword id="KW-1185">Reference proteome</keyword>
<keyword id="KW-0677">Repeat</keyword>
<keyword id="KW-0808">Transferase</keyword>
<comment type="catalytic activity">
    <reaction evidence="1">
        <text>(S)-2,3,4,5-tetrahydrodipicolinate + succinyl-CoA + H2O = (S)-2-succinylamino-6-oxoheptanedioate + CoA</text>
        <dbReference type="Rhea" id="RHEA:17325"/>
        <dbReference type="ChEBI" id="CHEBI:15377"/>
        <dbReference type="ChEBI" id="CHEBI:15685"/>
        <dbReference type="ChEBI" id="CHEBI:16845"/>
        <dbReference type="ChEBI" id="CHEBI:57287"/>
        <dbReference type="ChEBI" id="CHEBI:57292"/>
        <dbReference type="EC" id="2.3.1.117"/>
    </reaction>
</comment>
<comment type="pathway">
    <text evidence="1">Amino-acid biosynthesis; L-lysine biosynthesis via DAP pathway; LL-2,6-diaminopimelate from (S)-tetrahydrodipicolinate (succinylase route): step 1/3.</text>
</comment>
<comment type="subunit">
    <text evidence="1">Homotrimer.</text>
</comment>
<comment type="subcellular location">
    <subcellularLocation>
        <location evidence="1">Cytoplasm</location>
    </subcellularLocation>
</comment>
<comment type="similarity">
    <text evidence="1">Belongs to the transferase hexapeptide repeat family.</text>
</comment>
<gene>
    <name evidence="1" type="primary">dapD</name>
    <name type="ordered locus">c0201</name>
</gene>
<organism>
    <name type="scientific">Escherichia coli O6:H1 (strain CFT073 / ATCC 700928 / UPEC)</name>
    <dbReference type="NCBI Taxonomy" id="199310"/>
    <lineage>
        <taxon>Bacteria</taxon>
        <taxon>Pseudomonadati</taxon>
        <taxon>Pseudomonadota</taxon>
        <taxon>Gammaproteobacteria</taxon>
        <taxon>Enterobacterales</taxon>
        <taxon>Enterobacteriaceae</taxon>
        <taxon>Escherichia</taxon>
    </lineage>
</organism>
<protein>
    <recommendedName>
        <fullName evidence="1">2,3,4,5-tetrahydropyridine-2,6-dicarboxylate N-succinyltransferase</fullName>
        <ecNumber evidence="1">2.3.1.117</ecNumber>
    </recommendedName>
    <alternativeName>
        <fullName evidence="1">Tetrahydrodipicolinate N-succinyltransferase</fullName>
        <shortName evidence="1">THDP succinyltransferase</shortName>
        <shortName evidence="1">THP succinyltransferase</shortName>
        <shortName evidence="1">Tetrahydropicolinate succinylase</shortName>
    </alternativeName>
</protein>
<proteinExistence type="inferred from homology"/>
<dbReference type="EC" id="2.3.1.117" evidence="1"/>
<dbReference type="EMBL" id="AE014075">
    <property type="protein sequence ID" value="AAN78695.1"/>
    <property type="molecule type" value="Genomic_DNA"/>
</dbReference>
<dbReference type="RefSeq" id="WP_001186653.1">
    <property type="nucleotide sequence ID" value="NZ_CP051263.1"/>
</dbReference>
<dbReference type="SMR" id="Q8FL11"/>
<dbReference type="STRING" id="199310.c0201"/>
<dbReference type="KEGG" id="ecc:c0201"/>
<dbReference type="eggNOG" id="COG2171">
    <property type="taxonomic scope" value="Bacteria"/>
</dbReference>
<dbReference type="HOGENOM" id="CLU_050859_0_1_6"/>
<dbReference type="BioCyc" id="ECOL199310:C0201-MONOMER"/>
<dbReference type="UniPathway" id="UPA00034">
    <property type="reaction ID" value="UER00019"/>
</dbReference>
<dbReference type="Proteomes" id="UP000001410">
    <property type="component" value="Chromosome"/>
</dbReference>
<dbReference type="GO" id="GO:0005737">
    <property type="term" value="C:cytoplasm"/>
    <property type="evidence" value="ECO:0007669"/>
    <property type="project" value="UniProtKB-SubCell"/>
</dbReference>
<dbReference type="GO" id="GO:0008666">
    <property type="term" value="F:2,3,4,5-tetrahydropyridine-2,6-dicarboxylate N-succinyltransferase activity"/>
    <property type="evidence" value="ECO:0007669"/>
    <property type="project" value="UniProtKB-UniRule"/>
</dbReference>
<dbReference type="GO" id="GO:0016779">
    <property type="term" value="F:nucleotidyltransferase activity"/>
    <property type="evidence" value="ECO:0007669"/>
    <property type="project" value="TreeGrafter"/>
</dbReference>
<dbReference type="GO" id="GO:0019877">
    <property type="term" value="P:diaminopimelate biosynthetic process"/>
    <property type="evidence" value="ECO:0007669"/>
    <property type="project" value="UniProtKB-UniRule"/>
</dbReference>
<dbReference type="GO" id="GO:0009089">
    <property type="term" value="P:lysine biosynthetic process via diaminopimelate"/>
    <property type="evidence" value="ECO:0007669"/>
    <property type="project" value="UniProtKB-UniRule"/>
</dbReference>
<dbReference type="CDD" id="cd03350">
    <property type="entry name" value="LbH_THP_succinylT"/>
    <property type="match status" value="1"/>
</dbReference>
<dbReference type="FunFam" id="1.10.166.10:FF:000001">
    <property type="entry name" value="2,3,4,5-tetrahydropyridine-2,6-dicarboxylate N-succinyltransferase"/>
    <property type="match status" value="1"/>
</dbReference>
<dbReference type="FunFam" id="2.160.10.10:FF:000004">
    <property type="entry name" value="2,3,4,5-tetrahydropyridine-2,6-dicarboxylate N-succinyltransferase"/>
    <property type="match status" value="1"/>
</dbReference>
<dbReference type="Gene3D" id="2.160.10.10">
    <property type="entry name" value="Hexapeptide repeat proteins"/>
    <property type="match status" value="1"/>
</dbReference>
<dbReference type="Gene3D" id="1.10.166.10">
    <property type="entry name" value="Tetrahydrodipicolinate-N-succinyltransferase, N-terminal domain"/>
    <property type="match status" value="1"/>
</dbReference>
<dbReference type="HAMAP" id="MF_00811">
    <property type="entry name" value="DapD"/>
    <property type="match status" value="1"/>
</dbReference>
<dbReference type="InterPro" id="IPR005664">
    <property type="entry name" value="DapD_Trfase_Hexpep_rpt_fam"/>
</dbReference>
<dbReference type="InterPro" id="IPR001451">
    <property type="entry name" value="Hexapep"/>
</dbReference>
<dbReference type="InterPro" id="IPR018357">
    <property type="entry name" value="Hexapep_transf_CS"/>
</dbReference>
<dbReference type="InterPro" id="IPR023180">
    <property type="entry name" value="THP_succinylTrfase_dom1"/>
</dbReference>
<dbReference type="InterPro" id="IPR037133">
    <property type="entry name" value="THP_succinylTrfase_N_sf"/>
</dbReference>
<dbReference type="InterPro" id="IPR011004">
    <property type="entry name" value="Trimer_LpxA-like_sf"/>
</dbReference>
<dbReference type="NCBIfam" id="TIGR00965">
    <property type="entry name" value="dapD"/>
    <property type="match status" value="1"/>
</dbReference>
<dbReference type="NCBIfam" id="NF008808">
    <property type="entry name" value="PRK11830.1"/>
    <property type="match status" value="1"/>
</dbReference>
<dbReference type="PANTHER" id="PTHR19136:SF52">
    <property type="entry name" value="2,3,4,5-TETRAHYDROPYRIDINE-2,6-DICARBOXYLATE N-SUCCINYLTRANSFERASE"/>
    <property type="match status" value="1"/>
</dbReference>
<dbReference type="PANTHER" id="PTHR19136">
    <property type="entry name" value="MOLYBDENUM COFACTOR GUANYLYLTRANSFERASE"/>
    <property type="match status" value="1"/>
</dbReference>
<dbReference type="Pfam" id="PF14602">
    <property type="entry name" value="Hexapep_2"/>
    <property type="match status" value="1"/>
</dbReference>
<dbReference type="Pfam" id="PF14805">
    <property type="entry name" value="THDPS_N_2"/>
    <property type="match status" value="1"/>
</dbReference>
<dbReference type="SUPFAM" id="SSF51161">
    <property type="entry name" value="Trimeric LpxA-like enzymes"/>
    <property type="match status" value="1"/>
</dbReference>
<dbReference type="PROSITE" id="PS00101">
    <property type="entry name" value="HEXAPEP_TRANSFERASES"/>
    <property type="match status" value="1"/>
</dbReference>
<name>DAPD_ECOL6</name>
<accession>Q8FL11</accession>
<feature type="chain" id="PRO_0000196935" description="2,3,4,5-tetrahydropyridine-2,6-dicarboxylate N-succinyltransferase">
    <location>
        <begin position="1"/>
        <end position="274"/>
    </location>
</feature>
<feature type="binding site" evidence="1">
    <location>
        <position position="104"/>
    </location>
    <ligand>
        <name>substrate</name>
    </ligand>
</feature>
<feature type="binding site" evidence="1">
    <location>
        <position position="141"/>
    </location>
    <ligand>
        <name>substrate</name>
    </ligand>
</feature>
<evidence type="ECO:0000255" key="1">
    <source>
        <dbReference type="HAMAP-Rule" id="MF_00811"/>
    </source>
</evidence>
<reference key="1">
    <citation type="journal article" date="2002" name="Proc. Natl. Acad. Sci. U.S.A.">
        <title>Extensive mosaic structure revealed by the complete genome sequence of uropathogenic Escherichia coli.</title>
        <authorList>
            <person name="Welch R.A."/>
            <person name="Burland V."/>
            <person name="Plunkett G. III"/>
            <person name="Redford P."/>
            <person name="Roesch P."/>
            <person name="Rasko D."/>
            <person name="Buckles E.L."/>
            <person name="Liou S.-R."/>
            <person name="Boutin A."/>
            <person name="Hackett J."/>
            <person name="Stroud D."/>
            <person name="Mayhew G.F."/>
            <person name="Rose D.J."/>
            <person name="Zhou S."/>
            <person name="Schwartz D.C."/>
            <person name="Perna N.T."/>
            <person name="Mobley H.L.T."/>
            <person name="Donnenberg M.S."/>
            <person name="Blattner F.R."/>
        </authorList>
    </citation>
    <scope>NUCLEOTIDE SEQUENCE [LARGE SCALE GENOMIC DNA]</scope>
    <source>
        <strain>CFT073 / ATCC 700928 / UPEC</strain>
    </source>
</reference>
<sequence>MQQLQNIIETAFERRAEITPANADTVTREAVNQVIALLDSGALRVAEKIDGQWVTHQWLKKAVLLSFRINDNQVIEGAESRYFDKVPMKFANYDEALFQKEGFRVVPPAAVRQGAFIARNTVLMPSYVNIGAYVDEGTMVDTWATVGSCAQIGKNVHLSGGVGIGGVLEPLQANPTIIEDNCFIGARSEVVEGVIVEEGSVISMGVYIGQSTRIYDRETGEIHYGRVPAGSVVVSGNLPSKDGKYSLYCAVIVKKVDAKTRGKVGINELLRTID</sequence>